<name>LEV9_CAEEL</name>
<comment type="function">
    <text evidence="5 6">Scaffolding protein that is necessary to cluster acetylcholine receptors at neuromuscular junctions.</text>
</comment>
<comment type="subcellular location">
    <subcellularLocation>
        <location evidence="5">Synapse</location>
    </subcellularLocation>
    <subcellularLocation>
        <location evidence="5">Secreted</location>
    </subcellularLocation>
    <text>Secreted by muscle cells and localizes at cholinergic neuromuscular junctions.</text>
</comment>
<comment type="PTM">
    <text evidence="6">Proteolytic processing of the C-terminus is required for clustering activity but not for secretion nor traffic.</text>
</comment>
<proteinExistence type="evidence at protein level"/>
<gene>
    <name type="primary">lev-9</name>
    <name type="ORF">T07H6.5</name>
</gene>
<reference key="1">
    <citation type="journal article" date="2009" name="Nature">
        <title>A secreted complement control-related protein ensures acetylcholine receptor clustering.</title>
        <authorList>
            <person name="Gendrel M."/>
            <person name="Rapti G."/>
            <person name="Richmond J.E."/>
            <person name="Bessereau J.L."/>
        </authorList>
    </citation>
    <scope>NUCLEOTIDE SEQUENCE [MRNA]</scope>
    <scope>FUNCTION</scope>
    <scope>SUBCELLULAR LOCATION</scope>
</reference>
<reference key="2">
    <citation type="journal article" date="1998" name="Science">
        <title>Genome sequence of the nematode C. elegans: a platform for investigating biology.</title>
        <authorList>
            <consortium name="The C. elegans sequencing consortium"/>
        </authorList>
    </citation>
    <scope>NUCLEOTIDE SEQUENCE [LARGE SCALE GENOMIC DNA]</scope>
    <source>
        <strain>Bristol N2</strain>
    </source>
</reference>
<reference key="3">
    <citation type="journal article" date="2014" name="J. Biol. Chem.">
        <title>Proteolytic processing of the extracellular scaffolding protein LEV-9 is required for clustering acetylcholine receptors.</title>
        <authorList>
            <person name="Briseno-Roa L."/>
            <person name="Bessereau J.L."/>
        </authorList>
    </citation>
    <scope>FUNCTION</scope>
    <scope>PROTEOLYTIC PROCESSING</scope>
</reference>
<accession>Q22328</accession>
<accession>C7C692</accession>
<keyword id="KW-1015">Disulfide bond</keyword>
<keyword id="KW-0325">Glycoprotein</keyword>
<keyword id="KW-1185">Reference proteome</keyword>
<keyword id="KW-0677">Repeat</keyword>
<keyword id="KW-0964">Secreted</keyword>
<keyword id="KW-0732">Signal</keyword>
<keyword id="KW-0768">Sushi</keyword>
<keyword id="KW-0770">Synapse</keyword>
<dbReference type="EMBL" id="FN433774">
    <property type="protein sequence ID" value="CBA12962.1"/>
    <property type="molecule type" value="mRNA"/>
</dbReference>
<dbReference type="EMBL" id="FO081717">
    <property type="protein sequence ID" value="CCD74396.2"/>
    <property type="molecule type" value="Genomic_DNA"/>
</dbReference>
<dbReference type="PIR" id="T16833">
    <property type="entry name" value="T16833"/>
</dbReference>
<dbReference type="RefSeq" id="NP_509053.3">
    <property type="nucleotide sequence ID" value="NM_076652.6"/>
</dbReference>
<dbReference type="SMR" id="Q22328"/>
<dbReference type="BioGRID" id="45833">
    <property type="interactions" value="1"/>
</dbReference>
<dbReference type="FunCoup" id="Q22328">
    <property type="interactions" value="67"/>
</dbReference>
<dbReference type="STRING" id="6239.T07H6.5b.1"/>
<dbReference type="GlyCosmos" id="Q22328">
    <property type="glycosylation" value="1 site, No reported glycans"/>
</dbReference>
<dbReference type="PaxDb" id="6239-T07H6.5"/>
<dbReference type="EnsemblMetazoa" id="T07H6.5a.1">
    <property type="protein sequence ID" value="T07H6.5a.1"/>
    <property type="gene ID" value="WBGene00002976"/>
</dbReference>
<dbReference type="GeneID" id="188252"/>
<dbReference type="KEGG" id="cel:CELE_T07H6.5"/>
<dbReference type="UCSC" id="T07H6.5">
    <property type="organism name" value="c. elegans"/>
</dbReference>
<dbReference type="AGR" id="WB:WBGene00002976"/>
<dbReference type="CTD" id="188252"/>
<dbReference type="WormBase" id="T07H6.5a">
    <property type="protein sequence ID" value="CE47917"/>
    <property type="gene ID" value="WBGene00002976"/>
    <property type="gene designation" value="lev-9"/>
</dbReference>
<dbReference type="eggNOG" id="KOG4297">
    <property type="taxonomic scope" value="Eukaryota"/>
</dbReference>
<dbReference type="GeneTree" id="ENSGT00940000163310"/>
<dbReference type="HOGENOM" id="CLU_502134_0_0_1"/>
<dbReference type="InParanoid" id="Q22328"/>
<dbReference type="OMA" id="EPSCEKV"/>
<dbReference type="OrthoDB" id="9991441at2759"/>
<dbReference type="PRO" id="PR:Q22328"/>
<dbReference type="Proteomes" id="UP000001940">
    <property type="component" value="Chromosome X"/>
</dbReference>
<dbReference type="Bgee" id="WBGene00002976">
    <property type="expression patterns" value="Expressed in larva and 2 other cell types or tissues"/>
</dbReference>
<dbReference type="ExpressionAtlas" id="Q22328">
    <property type="expression patterns" value="baseline and differential"/>
</dbReference>
<dbReference type="GO" id="GO:0005615">
    <property type="term" value="C:extracellular space"/>
    <property type="evidence" value="ECO:0000314"/>
    <property type="project" value="WormBase"/>
</dbReference>
<dbReference type="GO" id="GO:0045202">
    <property type="term" value="C:synapse"/>
    <property type="evidence" value="ECO:0007669"/>
    <property type="project" value="UniProtKB-SubCell"/>
</dbReference>
<dbReference type="GO" id="GO:0030414">
    <property type="term" value="F:peptidase inhibitor activity"/>
    <property type="evidence" value="ECO:0007669"/>
    <property type="project" value="InterPro"/>
</dbReference>
<dbReference type="CDD" id="cd00033">
    <property type="entry name" value="CCP"/>
    <property type="match status" value="6"/>
</dbReference>
<dbReference type="FunFam" id="2.10.70.10:FF:000181">
    <property type="entry name" value="Proclotting enzyme precursor, putative"/>
    <property type="match status" value="1"/>
</dbReference>
<dbReference type="Gene3D" id="2.10.70.10">
    <property type="entry name" value="Complement Module, domain 1"/>
    <property type="match status" value="8"/>
</dbReference>
<dbReference type="Gene3D" id="4.10.75.10">
    <property type="entry name" value="Elafin-like"/>
    <property type="match status" value="1"/>
</dbReference>
<dbReference type="InterPro" id="IPR050350">
    <property type="entry name" value="Compl-Cell_Adhes-Reg"/>
</dbReference>
<dbReference type="InterPro" id="IPR036645">
    <property type="entry name" value="Elafin-like_sf"/>
</dbReference>
<dbReference type="InterPro" id="IPR035976">
    <property type="entry name" value="Sushi/SCR/CCP_sf"/>
</dbReference>
<dbReference type="InterPro" id="IPR000436">
    <property type="entry name" value="Sushi_SCR_CCP_dom"/>
</dbReference>
<dbReference type="InterPro" id="IPR008197">
    <property type="entry name" value="WAP_dom"/>
</dbReference>
<dbReference type="PANTHER" id="PTHR19325">
    <property type="entry name" value="COMPLEMENT COMPONENT-RELATED SUSHI DOMAIN-CONTAINING"/>
    <property type="match status" value="1"/>
</dbReference>
<dbReference type="PANTHER" id="PTHR19325:SF558">
    <property type="entry name" value="PROTEIN LEV-9"/>
    <property type="match status" value="1"/>
</dbReference>
<dbReference type="Pfam" id="PF00084">
    <property type="entry name" value="Sushi"/>
    <property type="match status" value="6"/>
</dbReference>
<dbReference type="Pfam" id="PF00095">
    <property type="entry name" value="WAP"/>
    <property type="match status" value="1"/>
</dbReference>
<dbReference type="SMART" id="SM00032">
    <property type="entry name" value="CCP"/>
    <property type="match status" value="8"/>
</dbReference>
<dbReference type="SMART" id="SM00217">
    <property type="entry name" value="WAP"/>
    <property type="match status" value="1"/>
</dbReference>
<dbReference type="SUPFAM" id="SSF57535">
    <property type="entry name" value="Complement control module/SCR domain"/>
    <property type="match status" value="8"/>
</dbReference>
<dbReference type="SUPFAM" id="SSF57256">
    <property type="entry name" value="Elafin-like"/>
    <property type="match status" value="1"/>
</dbReference>
<dbReference type="PROSITE" id="PS50923">
    <property type="entry name" value="SUSHI"/>
    <property type="match status" value="8"/>
</dbReference>
<dbReference type="PROSITE" id="PS51390">
    <property type="entry name" value="WAP"/>
    <property type="match status" value="1"/>
</dbReference>
<evidence type="ECO:0000250" key="1"/>
<evidence type="ECO:0000255" key="2"/>
<evidence type="ECO:0000255" key="3">
    <source>
        <dbReference type="PROSITE-ProRule" id="PRU00302"/>
    </source>
</evidence>
<evidence type="ECO:0000255" key="4">
    <source>
        <dbReference type="PROSITE-ProRule" id="PRU00722"/>
    </source>
</evidence>
<evidence type="ECO:0000269" key="5">
    <source>
    </source>
</evidence>
<evidence type="ECO:0000269" key="6">
    <source>
    </source>
</evidence>
<feature type="signal peptide" evidence="2">
    <location>
        <begin position="1"/>
        <end position="16"/>
    </location>
</feature>
<feature type="chain" id="PRO_0000430313" description="Protein lev-9">
    <location>
        <begin position="17"/>
        <end position="575"/>
    </location>
</feature>
<feature type="propeptide" id="PRO_0000430314">
    <location>
        <begin position="576"/>
        <end position="622"/>
    </location>
</feature>
<feature type="domain" description="WAP; atypical" evidence="4">
    <location>
        <begin position="17"/>
        <end position="61"/>
    </location>
</feature>
<feature type="domain" description="Sushi 1" evidence="3">
    <location>
        <begin position="62"/>
        <end position="120"/>
    </location>
</feature>
<feature type="domain" description="Sushi 2" evidence="3">
    <location>
        <begin position="122"/>
        <end position="190"/>
    </location>
</feature>
<feature type="domain" description="Sushi 3" evidence="3">
    <location>
        <begin position="191"/>
        <end position="248"/>
    </location>
</feature>
<feature type="domain" description="Sushi 4" evidence="3">
    <location>
        <begin position="249"/>
        <end position="306"/>
    </location>
</feature>
<feature type="domain" description="Sushi 5" evidence="3">
    <location>
        <begin position="307"/>
        <end position="364"/>
    </location>
</feature>
<feature type="domain" description="Sushi 6" evidence="3">
    <location>
        <begin position="365"/>
        <end position="422"/>
    </location>
</feature>
<feature type="domain" description="Sushi 7" evidence="3">
    <location>
        <begin position="423"/>
        <end position="483"/>
    </location>
</feature>
<feature type="domain" description="Sushi 8" evidence="3">
    <location>
        <begin position="484"/>
        <end position="558"/>
    </location>
</feature>
<feature type="site" description="Cleavage">
    <location>
        <begin position="575"/>
        <end position="576"/>
    </location>
</feature>
<feature type="glycosylation site" description="N-linked (GlcNAc...) asparagine" evidence="2">
    <location>
        <position position="411"/>
    </location>
</feature>
<feature type="disulfide bond" evidence="1">
    <location>
        <begin position="19"/>
        <end position="49"/>
    </location>
</feature>
<feature type="disulfide bond" evidence="1">
    <location>
        <begin position="35"/>
        <end position="47"/>
    </location>
</feature>
<feature type="disulfide bond" evidence="1">
    <location>
        <begin position="41"/>
        <end position="57"/>
    </location>
</feature>
<feature type="disulfide bond" evidence="1">
    <location>
        <begin position="64"/>
        <end position="105"/>
    </location>
</feature>
<feature type="disulfide bond" evidence="1">
    <location>
        <begin position="91"/>
        <end position="118"/>
    </location>
</feature>
<feature type="disulfide bond" evidence="1">
    <location>
        <begin position="124"/>
        <end position="171"/>
    </location>
</feature>
<feature type="disulfide bond" evidence="1">
    <location>
        <begin position="154"/>
        <end position="188"/>
    </location>
</feature>
<feature type="disulfide bond" evidence="1">
    <location>
        <begin position="193"/>
        <end position="233"/>
    </location>
</feature>
<feature type="disulfide bond" evidence="1">
    <location>
        <begin position="219"/>
        <end position="246"/>
    </location>
</feature>
<feature type="disulfide bond" evidence="1">
    <location>
        <begin position="251"/>
        <end position="291"/>
    </location>
</feature>
<feature type="disulfide bond" evidence="1">
    <location>
        <begin position="277"/>
        <end position="304"/>
    </location>
</feature>
<feature type="disulfide bond" evidence="1">
    <location>
        <begin position="309"/>
        <end position="349"/>
    </location>
</feature>
<feature type="disulfide bond" evidence="1">
    <location>
        <begin position="335"/>
        <end position="362"/>
    </location>
</feature>
<feature type="disulfide bond" evidence="1">
    <location>
        <begin position="366"/>
        <end position="409"/>
    </location>
</feature>
<feature type="disulfide bond" evidence="1">
    <location>
        <begin position="395"/>
        <end position="420"/>
    </location>
</feature>
<feature type="disulfide bond" evidence="1">
    <location>
        <begin position="425"/>
        <end position="467"/>
    </location>
</feature>
<feature type="disulfide bond" evidence="1">
    <location>
        <begin position="452"/>
        <end position="481"/>
    </location>
</feature>
<feature type="disulfide bond" evidence="1">
    <location>
        <begin position="486"/>
        <end position="543"/>
    </location>
</feature>
<feature type="disulfide bond" evidence="1">
    <location>
        <begin position="529"/>
        <end position="556"/>
    </location>
</feature>
<organism>
    <name type="scientific">Caenorhabditis elegans</name>
    <dbReference type="NCBI Taxonomy" id="6239"/>
    <lineage>
        <taxon>Eukaryota</taxon>
        <taxon>Metazoa</taxon>
        <taxon>Ecdysozoa</taxon>
        <taxon>Nematoda</taxon>
        <taxon>Chromadorea</taxon>
        <taxon>Rhabditida</taxon>
        <taxon>Rhabditina</taxon>
        <taxon>Rhabditomorpha</taxon>
        <taxon>Rhabditoidea</taxon>
        <taxon>Rhabditidae</taxon>
        <taxon>Peloderinae</taxon>
        <taxon>Caenorhabditis</taxon>
    </lineage>
</organism>
<sequence>MRFLLLLAISITYASALSCPEVTLSQRPKHCKKECIADEDCKRNKRCMCDGECGLSCVNPIAMCHPLPNIENGFIRTAGDLRFGSNAEYGCNKGYILVGASQRRCQANKEWSSSQPVCRLQLKCGPPPEIPFAVHDGSSFSGEYDLDAEVAYNCIPGYHKFNAKGLSISKCLLNRKNVAQWFGPDLRCKARACPDPGDIENGLREGDTFEYPHHVKYSCNPGFLLVGSTSRQCSSNGEWTNEPANCKATECSRPSSPLHGKVVGSSLTYQSVVTYSCDHGYRLVGQVQRICLAEGIWGGNEPRCEEIRCSVLPTLPNGYIEGSETSFGAVAVFRCLETMTHEGASKAKCMEDGQWSAPIPRCLASCRVPHIQNGKIRDKSEGQLIASGSKVIVECNKQHEANIDERLICSNSTWSHVPVCSPLSCHNWPPRVPHARILFSKSSHGSIAKYECNNGYHPNRNNQIIKCLYGEWTKDGPPMKCLPSWCEHPSKTYGTLPGGQILLEGILGAYEFQSYIQKVEEGRAISFQCGKGNYLIGPPKATCVNGEWMPKVSPKCVSQTHPMIEGKILWDRKKRSLPGRAVREYVDDELSTHRQHSGKCGIVSGKLERMIMQHSDNGVSVC</sequence>
<protein>
    <recommendedName>
        <fullName>Protein lev-9</fullName>
    </recommendedName>
</protein>